<name>ACCD_NICSY</name>
<feature type="chain" id="PRO_0000359154" description="Acetyl-coenzyme A carboxylase carboxyl transferase subunit beta, chloroplastic">
    <location>
        <begin position="1"/>
        <end position="495"/>
    </location>
</feature>
<feature type="domain" description="CoA carboxyltransferase N-terminal" evidence="3">
    <location>
        <begin position="226"/>
        <end position="495"/>
    </location>
</feature>
<feature type="zinc finger region" description="C4-type" evidence="2">
    <location>
        <begin position="230"/>
        <end position="252"/>
    </location>
</feature>
<feature type="region of interest" description="Disordered" evidence="4">
    <location>
        <begin position="187"/>
        <end position="208"/>
    </location>
</feature>
<feature type="binding site" evidence="2">
    <location>
        <position position="230"/>
    </location>
    <ligand>
        <name>Zn(2+)</name>
        <dbReference type="ChEBI" id="CHEBI:29105"/>
    </ligand>
</feature>
<feature type="binding site" evidence="2">
    <location>
        <position position="233"/>
    </location>
    <ligand>
        <name>Zn(2+)</name>
        <dbReference type="ChEBI" id="CHEBI:29105"/>
    </ligand>
</feature>
<feature type="binding site" evidence="2">
    <location>
        <position position="249"/>
    </location>
    <ligand>
        <name>Zn(2+)</name>
        <dbReference type="ChEBI" id="CHEBI:29105"/>
    </ligand>
</feature>
<feature type="binding site" evidence="2">
    <location>
        <position position="252"/>
    </location>
    <ligand>
        <name>Zn(2+)</name>
        <dbReference type="ChEBI" id="CHEBI:29105"/>
    </ligand>
</feature>
<keyword id="KW-0067">ATP-binding</keyword>
<keyword id="KW-0150">Chloroplast</keyword>
<keyword id="KW-0275">Fatty acid biosynthesis</keyword>
<keyword id="KW-0276">Fatty acid metabolism</keyword>
<keyword id="KW-0444">Lipid biosynthesis</keyword>
<keyword id="KW-0443">Lipid metabolism</keyword>
<keyword id="KW-0479">Metal-binding</keyword>
<keyword id="KW-0547">Nucleotide-binding</keyword>
<keyword id="KW-0934">Plastid</keyword>
<keyword id="KW-1185">Reference proteome</keyword>
<keyword id="KW-0808">Transferase</keyword>
<keyword id="KW-0862">Zinc</keyword>
<keyword id="KW-0863">Zinc-finger</keyword>
<reference key="1">
    <citation type="journal article" date="2006" name="Mol. Genet. Genomics">
        <title>The chloroplast genome of Nicotiana sylvestris and Nicotiana tomentosiformis: complete sequencing confirms that the Nicotiana sylvestris progenitor is the maternal genome donor of Nicotiana tabacum.</title>
        <authorList>
            <person name="Yukawa M."/>
            <person name="Tsudzuki T."/>
            <person name="Sugiura M."/>
        </authorList>
    </citation>
    <scope>NUCLEOTIDE SEQUENCE [LARGE SCALE GENOMIC DNA]</scope>
</reference>
<dbReference type="EC" id="2.1.3.15" evidence="2"/>
<dbReference type="EMBL" id="AB237912">
    <property type="protein sequence ID" value="BAE46660.1"/>
    <property type="status" value="ALT_INIT"/>
    <property type="molecule type" value="Genomic_DNA"/>
</dbReference>
<dbReference type="RefSeq" id="YP_358685.1">
    <property type="nucleotide sequence ID" value="NC_007500.1"/>
</dbReference>
<dbReference type="SMR" id="Q3C1J3"/>
<dbReference type="GeneID" id="3735048"/>
<dbReference type="KEGG" id="nsy:3735048"/>
<dbReference type="OrthoDB" id="9438at4085"/>
<dbReference type="UniPathway" id="UPA00655">
    <property type="reaction ID" value="UER00711"/>
</dbReference>
<dbReference type="Proteomes" id="UP000189701">
    <property type="component" value="Chloroplast Pltd"/>
</dbReference>
<dbReference type="GO" id="GO:0009317">
    <property type="term" value="C:acetyl-CoA carboxylase complex"/>
    <property type="evidence" value="ECO:0007669"/>
    <property type="project" value="InterPro"/>
</dbReference>
<dbReference type="GO" id="GO:0009570">
    <property type="term" value="C:chloroplast stroma"/>
    <property type="evidence" value="ECO:0007669"/>
    <property type="project" value="UniProtKB-SubCell"/>
</dbReference>
<dbReference type="GO" id="GO:0003989">
    <property type="term" value="F:acetyl-CoA carboxylase activity"/>
    <property type="evidence" value="ECO:0007669"/>
    <property type="project" value="InterPro"/>
</dbReference>
<dbReference type="GO" id="GO:0005524">
    <property type="term" value="F:ATP binding"/>
    <property type="evidence" value="ECO:0007669"/>
    <property type="project" value="UniProtKB-KW"/>
</dbReference>
<dbReference type="GO" id="GO:0016743">
    <property type="term" value="F:carboxyl- or carbamoyltransferase activity"/>
    <property type="evidence" value="ECO:0007669"/>
    <property type="project" value="UniProtKB-UniRule"/>
</dbReference>
<dbReference type="GO" id="GO:0008270">
    <property type="term" value="F:zinc ion binding"/>
    <property type="evidence" value="ECO:0007669"/>
    <property type="project" value="UniProtKB-UniRule"/>
</dbReference>
<dbReference type="GO" id="GO:0006633">
    <property type="term" value="P:fatty acid biosynthetic process"/>
    <property type="evidence" value="ECO:0007669"/>
    <property type="project" value="UniProtKB-KW"/>
</dbReference>
<dbReference type="GO" id="GO:2001295">
    <property type="term" value="P:malonyl-CoA biosynthetic process"/>
    <property type="evidence" value="ECO:0007669"/>
    <property type="project" value="UniProtKB-UniRule"/>
</dbReference>
<dbReference type="Gene3D" id="3.90.226.10">
    <property type="entry name" value="2-enoyl-CoA Hydratase, Chain A, domain 1"/>
    <property type="match status" value="1"/>
</dbReference>
<dbReference type="HAMAP" id="MF_01395">
    <property type="entry name" value="AcetylCoA_CT_beta"/>
    <property type="match status" value="1"/>
</dbReference>
<dbReference type="InterPro" id="IPR034733">
    <property type="entry name" value="AcCoA_carboxyl_beta"/>
</dbReference>
<dbReference type="InterPro" id="IPR000438">
    <property type="entry name" value="Acetyl_CoA_COase_Trfase_b_su"/>
</dbReference>
<dbReference type="InterPro" id="IPR029045">
    <property type="entry name" value="ClpP/crotonase-like_dom_sf"/>
</dbReference>
<dbReference type="InterPro" id="IPR011762">
    <property type="entry name" value="COA_CT_N"/>
</dbReference>
<dbReference type="NCBIfam" id="TIGR00515">
    <property type="entry name" value="accD"/>
    <property type="match status" value="1"/>
</dbReference>
<dbReference type="PANTHER" id="PTHR42995">
    <property type="entry name" value="ACETYL-COENZYME A CARBOXYLASE CARBOXYL TRANSFERASE SUBUNIT BETA, CHLOROPLASTIC"/>
    <property type="match status" value="1"/>
</dbReference>
<dbReference type="PANTHER" id="PTHR42995:SF5">
    <property type="entry name" value="ACETYL-COENZYME A CARBOXYLASE CARBOXYL TRANSFERASE SUBUNIT BETA, CHLOROPLASTIC"/>
    <property type="match status" value="1"/>
</dbReference>
<dbReference type="Pfam" id="PF01039">
    <property type="entry name" value="Carboxyl_trans"/>
    <property type="match status" value="1"/>
</dbReference>
<dbReference type="PRINTS" id="PR01070">
    <property type="entry name" value="ACCCTRFRASEB"/>
</dbReference>
<dbReference type="SUPFAM" id="SSF52096">
    <property type="entry name" value="ClpP/crotonase"/>
    <property type="match status" value="1"/>
</dbReference>
<dbReference type="PROSITE" id="PS50980">
    <property type="entry name" value="COA_CT_NTER"/>
    <property type="match status" value="1"/>
</dbReference>
<gene>
    <name evidence="2" type="primary">accD</name>
</gene>
<protein>
    <recommendedName>
        <fullName evidence="2">Acetyl-coenzyme A carboxylase carboxyl transferase subunit beta, chloroplastic</fullName>
        <shortName evidence="2">ACCase subunit beta</shortName>
        <shortName evidence="2">Acetyl-CoA carboxylase carboxyltransferase subunit beta</shortName>
        <ecNumber evidence="2">2.1.3.15</ecNumber>
    </recommendedName>
</protein>
<geneLocation type="chloroplast"/>
<evidence type="ECO:0000250" key="1"/>
<evidence type="ECO:0000255" key="2">
    <source>
        <dbReference type="HAMAP-Rule" id="MF_01395"/>
    </source>
</evidence>
<evidence type="ECO:0000255" key="3">
    <source>
        <dbReference type="PROSITE-ProRule" id="PRU01136"/>
    </source>
</evidence>
<evidence type="ECO:0000256" key="4">
    <source>
        <dbReference type="SAM" id="MobiDB-lite"/>
    </source>
</evidence>
<evidence type="ECO:0000305" key="5"/>
<accession>Q3C1J3</accession>
<proteinExistence type="inferred from homology"/>
<sequence>MERWWFNSMLFKKEFERRCGLNKSMGSLGPIENTNEDPNRKVKNIHSWRNRDNSSCSNVDYLFGVKDIRNFISDDTFLVSDRNGDSYSIYFDIENHIFEIDNDHSFLSELESSFYSYRNSNYRNNGFRGEDPYYNSYMYDTQYSWNNHINSCIDSYLQSQICIDTSIISGSENYGDSYIYRAVCGGESRNSSENEGSSRRTRTKGSDLTIRESSNDLEVTQKYRHLWVQCENCYGLNYKKFLKSKMNICEQCGYHLKMSSSDRIELLIDPGTWDPMDEDMVSLDPIEFHSEEEPYKDRIDSYQRKTGLTEAVQTGIGQLNGIPVAIGVMDFQFMGGSMGSVVGEKITRLIEYAANQILPLIIVCASGGARMQEGSLSLMQMAKISSALYDYQLNKKLFYVSILTSPTTGGVTASFGMLGDIIIAEPNAYIAFAGKRVIEQTLNKTVPEGSQAAEYLFQKGLFDLIVPRNLLKSVLSELFKLHAFFPLNQKSSKIK</sequence>
<organism>
    <name type="scientific">Nicotiana sylvestris</name>
    <name type="common">Wood tobacco</name>
    <name type="synonym">South American tobacco</name>
    <dbReference type="NCBI Taxonomy" id="4096"/>
    <lineage>
        <taxon>Eukaryota</taxon>
        <taxon>Viridiplantae</taxon>
        <taxon>Streptophyta</taxon>
        <taxon>Embryophyta</taxon>
        <taxon>Tracheophyta</taxon>
        <taxon>Spermatophyta</taxon>
        <taxon>Magnoliopsida</taxon>
        <taxon>eudicotyledons</taxon>
        <taxon>Gunneridae</taxon>
        <taxon>Pentapetalae</taxon>
        <taxon>asterids</taxon>
        <taxon>lamiids</taxon>
        <taxon>Solanales</taxon>
        <taxon>Solanaceae</taxon>
        <taxon>Nicotianoideae</taxon>
        <taxon>Nicotianeae</taxon>
        <taxon>Nicotiana</taxon>
    </lineage>
</organism>
<comment type="function">
    <text evidence="2">Component of the acetyl coenzyme A carboxylase (ACC) complex. Biotin carboxylase (BC) catalyzes the carboxylation of biotin on its carrier protein (BCCP) and then the CO(2) group is transferred by the transcarboxylase to acetyl-CoA to form malonyl-CoA.</text>
</comment>
<comment type="catalytic activity">
    <reaction evidence="2">
        <text>N(6)-carboxybiotinyl-L-lysyl-[protein] + acetyl-CoA = N(6)-biotinyl-L-lysyl-[protein] + malonyl-CoA</text>
        <dbReference type="Rhea" id="RHEA:54728"/>
        <dbReference type="Rhea" id="RHEA-COMP:10505"/>
        <dbReference type="Rhea" id="RHEA-COMP:10506"/>
        <dbReference type="ChEBI" id="CHEBI:57288"/>
        <dbReference type="ChEBI" id="CHEBI:57384"/>
        <dbReference type="ChEBI" id="CHEBI:83144"/>
        <dbReference type="ChEBI" id="CHEBI:83145"/>
        <dbReference type="EC" id="2.1.3.15"/>
    </reaction>
</comment>
<comment type="cofactor">
    <cofactor evidence="2">
        <name>Zn(2+)</name>
        <dbReference type="ChEBI" id="CHEBI:29105"/>
    </cofactor>
    <text evidence="2">Binds 1 zinc ion per subunit.</text>
</comment>
<comment type="pathway">
    <text evidence="2">Lipid metabolism; malonyl-CoA biosynthesis; malonyl-CoA from acetyl-CoA: step 1/1.</text>
</comment>
<comment type="subunit">
    <text evidence="1">Acetyl-CoA carboxylase is a heterohexamer composed of biotin carboxyl carrier protein, biotin carboxylase and 2 subunits each of ACCase subunit alpha and ACCase plastid-coded subunit beta (accD).</text>
</comment>
<comment type="subcellular location">
    <subcellularLocation>
        <location evidence="2">Plastid</location>
        <location evidence="2">Chloroplast stroma</location>
    </subcellularLocation>
</comment>
<comment type="similarity">
    <text evidence="2">Belongs to the AccD/PCCB family.</text>
</comment>
<comment type="sequence caution" evidence="5">
    <conflict type="erroneous initiation">
        <sequence resource="EMBL-CDS" id="BAE46660"/>
    </conflict>
    <text>Extended N-terminus.</text>
</comment>